<dbReference type="EMBL" id="BA000028">
    <property type="protein sequence ID" value="BAC12081.1"/>
    <property type="molecule type" value="Genomic_DNA"/>
</dbReference>
<dbReference type="RefSeq" id="WP_011064528.1">
    <property type="nucleotide sequence ID" value="NC_004193.1"/>
</dbReference>
<dbReference type="SMR" id="P59182"/>
<dbReference type="STRING" id="221109.gene:10732315"/>
<dbReference type="KEGG" id="oih:OB0125"/>
<dbReference type="eggNOG" id="COG0092">
    <property type="taxonomic scope" value="Bacteria"/>
</dbReference>
<dbReference type="HOGENOM" id="CLU_058591_0_2_9"/>
<dbReference type="OrthoDB" id="9806396at2"/>
<dbReference type="PhylomeDB" id="P59182"/>
<dbReference type="Proteomes" id="UP000000822">
    <property type="component" value="Chromosome"/>
</dbReference>
<dbReference type="GO" id="GO:0022627">
    <property type="term" value="C:cytosolic small ribosomal subunit"/>
    <property type="evidence" value="ECO:0007669"/>
    <property type="project" value="TreeGrafter"/>
</dbReference>
<dbReference type="GO" id="GO:0003729">
    <property type="term" value="F:mRNA binding"/>
    <property type="evidence" value="ECO:0007669"/>
    <property type="project" value="UniProtKB-UniRule"/>
</dbReference>
<dbReference type="GO" id="GO:0019843">
    <property type="term" value="F:rRNA binding"/>
    <property type="evidence" value="ECO:0007669"/>
    <property type="project" value="UniProtKB-UniRule"/>
</dbReference>
<dbReference type="GO" id="GO:0003735">
    <property type="term" value="F:structural constituent of ribosome"/>
    <property type="evidence" value="ECO:0007669"/>
    <property type="project" value="InterPro"/>
</dbReference>
<dbReference type="GO" id="GO:0006412">
    <property type="term" value="P:translation"/>
    <property type="evidence" value="ECO:0007669"/>
    <property type="project" value="UniProtKB-UniRule"/>
</dbReference>
<dbReference type="CDD" id="cd02412">
    <property type="entry name" value="KH-II_30S_S3"/>
    <property type="match status" value="1"/>
</dbReference>
<dbReference type="FunFam" id="3.30.1140.32:FF:000001">
    <property type="entry name" value="30S ribosomal protein S3"/>
    <property type="match status" value="1"/>
</dbReference>
<dbReference type="FunFam" id="3.30.300.20:FF:000001">
    <property type="entry name" value="30S ribosomal protein S3"/>
    <property type="match status" value="1"/>
</dbReference>
<dbReference type="Gene3D" id="3.30.300.20">
    <property type="match status" value="1"/>
</dbReference>
<dbReference type="Gene3D" id="3.30.1140.32">
    <property type="entry name" value="Ribosomal protein S3, C-terminal domain"/>
    <property type="match status" value="1"/>
</dbReference>
<dbReference type="HAMAP" id="MF_01309_B">
    <property type="entry name" value="Ribosomal_uS3_B"/>
    <property type="match status" value="1"/>
</dbReference>
<dbReference type="InterPro" id="IPR004087">
    <property type="entry name" value="KH_dom"/>
</dbReference>
<dbReference type="InterPro" id="IPR015946">
    <property type="entry name" value="KH_dom-like_a/b"/>
</dbReference>
<dbReference type="InterPro" id="IPR004044">
    <property type="entry name" value="KH_dom_type_2"/>
</dbReference>
<dbReference type="InterPro" id="IPR009019">
    <property type="entry name" value="KH_sf_prok-type"/>
</dbReference>
<dbReference type="InterPro" id="IPR036419">
    <property type="entry name" value="Ribosomal_S3_C_sf"/>
</dbReference>
<dbReference type="InterPro" id="IPR005704">
    <property type="entry name" value="Ribosomal_uS3_bac-typ"/>
</dbReference>
<dbReference type="InterPro" id="IPR001351">
    <property type="entry name" value="Ribosomal_uS3_C"/>
</dbReference>
<dbReference type="InterPro" id="IPR018280">
    <property type="entry name" value="Ribosomal_uS3_CS"/>
</dbReference>
<dbReference type="NCBIfam" id="TIGR01009">
    <property type="entry name" value="rpsC_bact"/>
    <property type="match status" value="1"/>
</dbReference>
<dbReference type="PANTHER" id="PTHR11760">
    <property type="entry name" value="30S/40S RIBOSOMAL PROTEIN S3"/>
    <property type="match status" value="1"/>
</dbReference>
<dbReference type="PANTHER" id="PTHR11760:SF19">
    <property type="entry name" value="SMALL RIBOSOMAL SUBUNIT PROTEIN US3C"/>
    <property type="match status" value="1"/>
</dbReference>
<dbReference type="Pfam" id="PF07650">
    <property type="entry name" value="KH_2"/>
    <property type="match status" value="1"/>
</dbReference>
<dbReference type="Pfam" id="PF00189">
    <property type="entry name" value="Ribosomal_S3_C"/>
    <property type="match status" value="1"/>
</dbReference>
<dbReference type="SMART" id="SM00322">
    <property type="entry name" value="KH"/>
    <property type="match status" value="1"/>
</dbReference>
<dbReference type="SUPFAM" id="SSF54814">
    <property type="entry name" value="Prokaryotic type KH domain (KH-domain type II)"/>
    <property type="match status" value="1"/>
</dbReference>
<dbReference type="SUPFAM" id="SSF54821">
    <property type="entry name" value="Ribosomal protein S3 C-terminal domain"/>
    <property type="match status" value="1"/>
</dbReference>
<dbReference type="PROSITE" id="PS50823">
    <property type="entry name" value="KH_TYPE_2"/>
    <property type="match status" value="1"/>
</dbReference>
<dbReference type="PROSITE" id="PS00548">
    <property type="entry name" value="RIBOSOMAL_S3"/>
    <property type="match status" value="1"/>
</dbReference>
<evidence type="ECO:0000255" key="1">
    <source>
        <dbReference type="HAMAP-Rule" id="MF_01309"/>
    </source>
</evidence>
<evidence type="ECO:0000305" key="2"/>
<organism>
    <name type="scientific">Oceanobacillus iheyensis (strain DSM 14371 / CIP 107618 / JCM 11309 / KCTC 3954 / HTE831)</name>
    <dbReference type="NCBI Taxonomy" id="221109"/>
    <lineage>
        <taxon>Bacteria</taxon>
        <taxon>Bacillati</taxon>
        <taxon>Bacillota</taxon>
        <taxon>Bacilli</taxon>
        <taxon>Bacillales</taxon>
        <taxon>Bacillaceae</taxon>
        <taxon>Oceanobacillus</taxon>
    </lineage>
</organism>
<gene>
    <name evidence="1" type="primary">rpsC</name>
    <name type="ordered locus">OB0125</name>
</gene>
<sequence>MGQKINPTGLRVGIIKDWESKWYAGKDYADLLHEDIKIREYLENRLSTAAVSSIEIERAANRVNITIHTGKPGMVIGKGGSEVEALRKSLNNLTGKRVHINIVEIKKVDLDATLVADSIARQLENRISFRRAQKQAIQRAMRGGAKGIKTQVSGRLGGADIARAEHYSEGTVPLHTLRADIDYGTAEADTTYGKLGVKVWIYRGEVLPTKTDK</sequence>
<keyword id="KW-1185">Reference proteome</keyword>
<keyword id="KW-0687">Ribonucleoprotein</keyword>
<keyword id="KW-0689">Ribosomal protein</keyword>
<keyword id="KW-0694">RNA-binding</keyword>
<keyword id="KW-0699">rRNA-binding</keyword>
<protein>
    <recommendedName>
        <fullName evidence="1">Small ribosomal subunit protein uS3</fullName>
    </recommendedName>
    <alternativeName>
        <fullName evidence="2">30S ribosomal protein S3</fullName>
    </alternativeName>
</protein>
<name>RS3_OCEIH</name>
<comment type="function">
    <text evidence="1">Binds the lower part of the 30S subunit head. Binds mRNA in the 70S ribosome, positioning it for translation.</text>
</comment>
<comment type="subunit">
    <text evidence="1">Part of the 30S ribosomal subunit. Forms a tight complex with proteins S10 and S14.</text>
</comment>
<comment type="similarity">
    <text evidence="1">Belongs to the universal ribosomal protein uS3 family.</text>
</comment>
<reference key="1">
    <citation type="journal article" date="2002" name="Nucleic Acids Res.">
        <title>Genome sequence of Oceanobacillus iheyensis isolated from the Iheya Ridge and its unexpected adaptive capabilities to extreme environments.</title>
        <authorList>
            <person name="Takami H."/>
            <person name="Takaki Y."/>
            <person name="Uchiyama I."/>
        </authorList>
    </citation>
    <scope>NUCLEOTIDE SEQUENCE [LARGE SCALE GENOMIC DNA]</scope>
    <source>
        <strain>DSM 14371 / CIP 107618 / JCM 11309 / KCTC 3954 / HTE831</strain>
    </source>
</reference>
<accession>P59182</accession>
<proteinExistence type="inferred from homology"/>
<feature type="chain" id="PRO_0000130164" description="Small ribosomal subunit protein uS3">
    <location>
        <begin position="1"/>
        <end position="213"/>
    </location>
</feature>
<feature type="domain" description="KH type-2" evidence="1">
    <location>
        <begin position="38"/>
        <end position="106"/>
    </location>
</feature>